<comment type="function">
    <text evidence="1 2">Required for the initiation of starch granules biosynthesis in leaf chloroplasts (By similarity). Anchored to the thylakoid membranes with its C-terminus facing into the stroma where it is essential for localizing PTST2 and SS4 to the stromal spaces between the thylakoid membranes in order to begin starch granule formation (By similarity). Associated with leaf chloroplastic nucleoids in vivo (By similarity). Binds to various chloroplastic double-stranded DNA fragments without particular sequence specificity in vitro (By similarity). May function at the interface between nucleoids and thylakoids possibly by anchoring nucleoids to the thylakoid membrane system in mature chloroplasts (By similarity). Likely to participate in nuclear architecture by connecting chromatin with the nuclear matrix and potentially with the nuclear envelope (By similarity).</text>
</comment>
<comment type="subunit">
    <text evidence="2">Interacts with PTST2; the interaction is essential for the initiation of starch granules biosynthesis in leaf chloroplasts, for the correct location of the process in the stromal spaces between the thylakoid membranes, and for the association of PTST2 with the thylakoid membranes.</text>
</comment>
<comment type="subcellular location">
    <subcellularLocation>
        <location evidence="3 5 6">Plastid</location>
        <location evidence="3 5 6">Chloroplast</location>
    </subcellularLocation>
    <subcellularLocation>
        <location evidence="5 6">Plastid</location>
        <location evidence="5 6">Chloroplast thylakoid membrane</location>
        <topology evidence="3">Single-pass membrane protein</topology>
        <orientation evidence="5">Stromal side</orientation>
    </subcellularLocation>
    <subcellularLocation>
        <location evidence="5">Plastid</location>
        <location evidence="5">Chloroplast stroma</location>
        <location evidence="5">Chloroplast nucleoid</location>
    </subcellularLocation>
    <subcellularLocation>
        <location evidence="5 6">Nucleus</location>
    </subcellularLocation>
    <subcellularLocation>
        <location evidence="5 6">Nucleus matrix</location>
    </subcellularLocation>
    <text evidence="2 5">Is in the membrane-bound (insoluble) protein fraction of the leaves. Forms punctate structures within the chloroplasts of epidermal mature leaf cells and isolated mesophyll protoplasts. Distributed throughout chloroplasts locating to small patches (By similarity). Associates with thylakoid membranes in mature leaf chloroplasts. Has a direct physical interaction with nucleoids in mature leaf chloroplasts (PubMed:12930969).</text>
</comment>
<comment type="domain">
    <text evidence="1">The C-terminal part is necessary for DNA-binding.</text>
</comment>
<comment type="PTM">
    <text evidence="2">Predicted to be translocated into the thylakoid by the Tat system.</text>
</comment>
<keyword id="KW-0150">Chloroplast</keyword>
<keyword id="KW-0175">Coiled coil</keyword>
<keyword id="KW-0238">DNA-binding</keyword>
<keyword id="KW-0472">Membrane</keyword>
<keyword id="KW-0539">Nucleus</keyword>
<keyword id="KW-0934">Plastid</keyword>
<keyword id="KW-1185">Reference proteome</keyword>
<keyword id="KW-0750">Starch biosynthesis</keyword>
<keyword id="KW-0793">Thylakoid</keyword>
<keyword id="KW-0809">Transit peptide</keyword>
<keyword id="KW-0812">Transmembrane</keyword>
<keyword id="KW-1133">Transmembrane helix</keyword>
<reference key="1">
    <citation type="journal article" date="2000" name="Plant Physiol.">
        <title>Conservation of matrix attachment region-binding filament-like protein 1 among higher plants.</title>
        <authorList>
            <person name="Harder P.A."/>
            <person name="Silverstein R.A."/>
            <person name="Meier I."/>
        </authorList>
    </citation>
    <scope>NUCLEOTIDE SEQUENCE [MRNA]</scope>
    <source>
        <strain evidence="7">cv. SR1</strain>
        <tissue evidence="7">Leaf</tissue>
    </source>
</reference>
<reference key="2">
    <citation type="journal article" date="2003" name="Nucleic Acids Res.">
        <title>MFP1 is a thylakoid-associated, nucleoid-binding protein with a coiled-coil structure.</title>
        <authorList>
            <person name="Jeong S.Y."/>
            <person name="Rose A."/>
            <person name="Meier I."/>
        </authorList>
    </citation>
    <scope>SUBCELLULAR LOCATION</scope>
    <scope>TOPOLOGY</scope>
</reference>
<reference key="3">
    <citation type="journal article" date="2006" name="Planta">
        <title>Dual location of MAR-binding, filament-like protein 1 in Arabidopsis, tobacco, and tomato.</title>
        <authorList>
            <person name="Samaniego R."/>
            <person name="Jeong S.Y."/>
            <person name="Meier I."/>
            <person name="de la Espina S.M."/>
        </authorList>
    </citation>
    <scope>SUBCELLULAR LOCATION</scope>
    <source>
        <strain evidence="8">cv. Xanthi NC</strain>
    </source>
</reference>
<proteinExistence type="evidence at protein level"/>
<dbReference type="EMBL" id="AF131231">
    <property type="protein sequence ID" value="AAF36519.1"/>
    <property type="molecule type" value="mRNA"/>
</dbReference>
<dbReference type="RefSeq" id="NP_001312474.1">
    <property type="nucleotide sequence ID" value="NM_001325545.1"/>
</dbReference>
<dbReference type="SMR" id="Q9M7J4"/>
<dbReference type="STRING" id="4097.Q9M7J4"/>
<dbReference type="PaxDb" id="4097-Q9M7J4"/>
<dbReference type="GeneID" id="107792739"/>
<dbReference type="KEGG" id="nta:107792739"/>
<dbReference type="OrthoDB" id="10255522at2759"/>
<dbReference type="Proteomes" id="UP000084051">
    <property type="component" value="Unplaced"/>
</dbReference>
<dbReference type="GO" id="GO:0042644">
    <property type="term" value="C:chloroplast nucleoid"/>
    <property type="evidence" value="ECO:0007669"/>
    <property type="project" value="UniProtKB-SubCell"/>
</dbReference>
<dbReference type="GO" id="GO:0009535">
    <property type="term" value="C:chloroplast thylakoid membrane"/>
    <property type="evidence" value="ECO:0007669"/>
    <property type="project" value="UniProtKB-SubCell"/>
</dbReference>
<dbReference type="GO" id="GO:0016363">
    <property type="term" value="C:nuclear matrix"/>
    <property type="evidence" value="ECO:0007669"/>
    <property type="project" value="UniProtKB-SubCell"/>
</dbReference>
<dbReference type="GO" id="GO:0003677">
    <property type="term" value="F:DNA binding"/>
    <property type="evidence" value="ECO:0007669"/>
    <property type="project" value="UniProtKB-KW"/>
</dbReference>
<dbReference type="GO" id="GO:0019252">
    <property type="term" value="P:starch biosynthetic process"/>
    <property type="evidence" value="ECO:0007669"/>
    <property type="project" value="UniProtKB-KW"/>
</dbReference>
<dbReference type="Gene3D" id="1.10.287.1490">
    <property type="match status" value="1"/>
</dbReference>
<dbReference type="PANTHER" id="PTHR32083">
    <property type="entry name" value="CILIA AND FLAGELLA-ASSOCIATED PROTEIN 58-RELATED"/>
    <property type="match status" value="1"/>
</dbReference>
<dbReference type="SUPFAM" id="SSF57997">
    <property type="entry name" value="Tropomyosin"/>
    <property type="match status" value="1"/>
</dbReference>
<sequence length="722" mass="82161">MGSSCFPQSPLSHSLFSSSSLSSSQFTPLLFSPRNAQKCKKKMPAMACIHSENQKESEFCSRRTILFVGFSVLPLLSLRANAFEGLSVDSQVKAQPQKEETEQTIQGNAENPFFSLLNGLGVFGSGVLGSLYALARNEKAVSDATIESMKNKLKEKEATFVSMEKKFQSELLNERDIRNNQLKRAGEERQALVNQLNSAKSTVTNLGQELQKEKRIAEELIVQIEGLQNNLMQMKEDKKKLQEELKEKLDLIQVLQEKITLLTTEIKDKEASLQSTTSKLAEKESEVDKLSSMYQESQDQLMNLTSEIKELKVEVQKRERELELKRESEDNLNVRLNSLLVERDESKKELDAIQKEYSEFKSISEKKVASDAKLLGEQEKRLHQLEEQLGTASDEVRKNNVLIADLTQEKENLRRMLDAELENISKLKLEVQVTQETLEKSRSDASDIAQQLQQSRHLCSKLEAEVSKLQMELEETRTSLRRNIDETKRGAELLAAELTTTRELLKKTNEEMHTMSHELAAVTENCDNLQTELVDVYKKAERAADELKQEKNIVVTLEKELTFLEAQITREKESRKNLEEELERATESLDEMNRNAFALAKELELANSHISSLEDEREVLQKSVSEQKQISQESRENLEDAHSLVMKLGKERESLEKRAKKLEDEMASAKGEILRLRTQVNSVKAPVNNEEKVEAGEKAAVTVKRTRRRKTATQPASQQESS</sequence>
<organism>
    <name type="scientific">Nicotiana tabacum</name>
    <name type="common">Common tobacco</name>
    <dbReference type="NCBI Taxonomy" id="4097"/>
    <lineage>
        <taxon>Eukaryota</taxon>
        <taxon>Viridiplantae</taxon>
        <taxon>Streptophyta</taxon>
        <taxon>Embryophyta</taxon>
        <taxon>Tracheophyta</taxon>
        <taxon>Spermatophyta</taxon>
        <taxon>Magnoliopsida</taxon>
        <taxon>eudicotyledons</taxon>
        <taxon>Gunneridae</taxon>
        <taxon>Pentapetalae</taxon>
        <taxon>asterids</taxon>
        <taxon>lamiids</taxon>
        <taxon>Solanales</taxon>
        <taxon>Solanaceae</taxon>
        <taxon>Nicotianoideae</taxon>
        <taxon>Nicotianeae</taxon>
        <taxon>Nicotiana</taxon>
    </lineage>
</organism>
<evidence type="ECO:0000250" key="1">
    <source>
        <dbReference type="UniProtKB" id="P93203"/>
    </source>
</evidence>
<evidence type="ECO:0000250" key="2">
    <source>
        <dbReference type="UniProtKB" id="Q9LW85"/>
    </source>
</evidence>
<evidence type="ECO:0000255" key="3"/>
<evidence type="ECO:0000256" key="4">
    <source>
        <dbReference type="SAM" id="MobiDB-lite"/>
    </source>
</evidence>
<evidence type="ECO:0000269" key="5">
    <source>
    </source>
</evidence>
<evidence type="ECO:0000269" key="6">
    <source>
    </source>
</evidence>
<evidence type="ECO:0000303" key="7">
    <source>
    </source>
</evidence>
<evidence type="ECO:0000303" key="8">
    <source>
    </source>
</evidence>
<name>MFP1_TOBAC</name>
<accession>Q9M7J4</accession>
<protein>
    <recommendedName>
        <fullName evidence="7">MAR-binding filament-like protein 1-1</fullName>
    </recommendedName>
    <alternativeName>
        <fullName evidence="7">Matrix attachment region-binding filament-like protein 1-1</fullName>
    </alternativeName>
</protein>
<feature type="transit peptide" description="Chloroplast" evidence="3">
    <location>
        <begin position="1"/>
        <end position="50"/>
    </location>
</feature>
<feature type="transit peptide" description="Thylakoid" evidence="2 3">
    <location>
        <begin position="51"/>
        <end position="84"/>
    </location>
</feature>
<feature type="chain" id="PRO_0000096462" description="MAR-binding filament-like protein 1-1" evidence="2 3">
    <location>
        <begin position="85"/>
        <end position="722"/>
    </location>
</feature>
<feature type="topological domain" description="Lumenal, thylakoid" evidence="2">
    <location>
        <begin position="85"/>
        <end position="112"/>
    </location>
</feature>
<feature type="transmembrane region" description="Helical" evidence="3">
    <location>
        <begin position="113"/>
        <end position="133"/>
    </location>
</feature>
<feature type="topological domain" description="Stromal" evidence="2">
    <location>
        <begin position="134"/>
        <end position="722"/>
    </location>
</feature>
<feature type="region of interest" description="Disordered" evidence="4">
    <location>
        <begin position="1"/>
        <end position="20"/>
    </location>
</feature>
<feature type="region of interest" description="Disordered" evidence="4">
    <location>
        <begin position="687"/>
        <end position="722"/>
    </location>
</feature>
<feature type="coiled-coil region" evidence="3">
    <location>
        <begin position="146"/>
        <end position="679"/>
    </location>
</feature>
<feature type="short sequence motif" description="Nuclear localization signal" evidence="2">
    <location>
        <begin position="705"/>
        <end position="712"/>
    </location>
</feature>
<gene>
    <name evidence="7" type="primary">MFP1-1</name>
</gene>